<accession>A4SQI0</accession>
<reference key="1">
    <citation type="journal article" date="2008" name="BMC Genomics">
        <title>The genome of Aeromonas salmonicida subsp. salmonicida A449: insights into the evolution of a fish pathogen.</title>
        <authorList>
            <person name="Reith M.E."/>
            <person name="Singh R.K."/>
            <person name="Curtis B."/>
            <person name="Boyd J.M."/>
            <person name="Bouevitch A."/>
            <person name="Kimball J."/>
            <person name="Munholland J."/>
            <person name="Murphy C."/>
            <person name="Sarty D."/>
            <person name="Williams J."/>
            <person name="Nash J.H."/>
            <person name="Johnson S.C."/>
            <person name="Brown L.L."/>
        </authorList>
    </citation>
    <scope>NUCLEOTIDE SEQUENCE [LARGE SCALE GENOMIC DNA]</scope>
    <source>
        <strain>A449</strain>
    </source>
</reference>
<name>PYRH_AERS4</name>
<comment type="function">
    <text evidence="1">Catalyzes the reversible phosphorylation of UMP to UDP.</text>
</comment>
<comment type="catalytic activity">
    <reaction evidence="1">
        <text>UMP + ATP = UDP + ADP</text>
        <dbReference type="Rhea" id="RHEA:24400"/>
        <dbReference type="ChEBI" id="CHEBI:30616"/>
        <dbReference type="ChEBI" id="CHEBI:57865"/>
        <dbReference type="ChEBI" id="CHEBI:58223"/>
        <dbReference type="ChEBI" id="CHEBI:456216"/>
        <dbReference type="EC" id="2.7.4.22"/>
    </reaction>
</comment>
<comment type="activity regulation">
    <text evidence="1">Allosterically activated by GTP. Inhibited by UTP.</text>
</comment>
<comment type="pathway">
    <text evidence="1">Pyrimidine metabolism; CTP biosynthesis via de novo pathway; UDP from UMP (UMPK route): step 1/1.</text>
</comment>
<comment type="subunit">
    <text evidence="1">Homohexamer.</text>
</comment>
<comment type="subcellular location">
    <subcellularLocation>
        <location evidence="1">Cytoplasm</location>
    </subcellularLocation>
</comment>
<comment type="similarity">
    <text evidence="1">Belongs to the UMP kinase family.</text>
</comment>
<proteinExistence type="inferred from homology"/>
<sequence>MSTNPKPAYRRVLLKLSGEALQGSEGFGIDPAVLERMAQEIKELVELGVQVGLVIGGGNLFRGAGLAKAGMNRVVGDHMGMLATVMNGLAMRDALHRAYVNARLMSAISLQGVCDSYSWAEAISQLRAGKVVIFSAGTGNPFFTTDSAACLRGIEIEADVVLKATKVDGVFNEDPVKNPDAVLYHELSYNEVLEKELKVMDLAAFTLARDHDLPIRVFNMNKPGALRRVIMGEPEGTLIHHIGK</sequence>
<dbReference type="EC" id="2.7.4.22" evidence="1"/>
<dbReference type="EMBL" id="CP000644">
    <property type="protein sequence ID" value="ABO91152.1"/>
    <property type="molecule type" value="Genomic_DNA"/>
</dbReference>
<dbReference type="RefSeq" id="WP_005312076.1">
    <property type="nucleotide sequence ID" value="NC_009348.1"/>
</dbReference>
<dbReference type="SMR" id="A4SQI0"/>
<dbReference type="STRING" id="29491.GCA_000820065_03539"/>
<dbReference type="GeneID" id="79880882"/>
<dbReference type="KEGG" id="asa:ASA_3158"/>
<dbReference type="eggNOG" id="COG0528">
    <property type="taxonomic scope" value="Bacteria"/>
</dbReference>
<dbReference type="HOGENOM" id="CLU_033861_0_0_6"/>
<dbReference type="UniPathway" id="UPA00159">
    <property type="reaction ID" value="UER00275"/>
</dbReference>
<dbReference type="Proteomes" id="UP000000225">
    <property type="component" value="Chromosome"/>
</dbReference>
<dbReference type="GO" id="GO:0005829">
    <property type="term" value="C:cytosol"/>
    <property type="evidence" value="ECO:0007669"/>
    <property type="project" value="TreeGrafter"/>
</dbReference>
<dbReference type="GO" id="GO:0005524">
    <property type="term" value="F:ATP binding"/>
    <property type="evidence" value="ECO:0007669"/>
    <property type="project" value="UniProtKB-KW"/>
</dbReference>
<dbReference type="GO" id="GO:0033862">
    <property type="term" value="F:UMP kinase activity"/>
    <property type="evidence" value="ECO:0007669"/>
    <property type="project" value="UniProtKB-EC"/>
</dbReference>
<dbReference type="GO" id="GO:0044210">
    <property type="term" value="P:'de novo' CTP biosynthetic process"/>
    <property type="evidence" value="ECO:0007669"/>
    <property type="project" value="UniProtKB-UniRule"/>
</dbReference>
<dbReference type="GO" id="GO:0006225">
    <property type="term" value="P:UDP biosynthetic process"/>
    <property type="evidence" value="ECO:0007669"/>
    <property type="project" value="TreeGrafter"/>
</dbReference>
<dbReference type="CDD" id="cd04254">
    <property type="entry name" value="AAK_UMPK-PyrH-Ec"/>
    <property type="match status" value="1"/>
</dbReference>
<dbReference type="FunFam" id="3.40.1160.10:FF:000001">
    <property type="entry name" value="Uridylate kinase"/>
    <property type="match status" value="1"/>
</dbReference>
<dbReference type="Gene3D" id="3.40.1160.10">
    <property type="entry name" value="Acetylglutamate kinase-like"/>
    <property type="match status" value="1"/>
</dbReference>
<dbReference type="HAMAP" id="MF_01220_B">
    <property type="entry name" value="PyrH_B"/>
    <property type="match status" value="1"/>
</dbReference>
<dbReference type="InterPro" id="IPR036393">
    <property type="entry name" value="AceGlu_kinase-like_sf"/>
</dbReference>
<dbReference type="InterPro" id="IPR001048">
    <property type="entry name" value="Asp/Glu/Uridylate_kinase"/>
</dbReference>
<dbReference type="InterPro" id="IPR011817">
    <property type="entry name" value="Uridylate_kinase"/>
</dbReference>
<dbReference type="InterPro" id="IPR015963">
    <property type="entry name" value="Uridylate_kinase_bac"/>
</dbReference>
<dbReference type="NCBIfam" id="TIGR02075">
    <property type="entry name" value="pyrH_bact"/>
    <property type="match status" value="1"/>
</dbReference>
<dbReference type="PANTHER" id="PTHR42833">
    <property type="entry name" value="URIDYLATE KINASE"/>
    <property type="match status" value="1"/>
</dbReference>
<dbReference type="PANTHER" id="PTHR42833:SF4">
    <property type="entry name" value="URIDYLATE KINASE PUMPKIN, CHLOROPLASTIC"/>
    <property type="match status" value="1"/>
</dbReference>
<dbReference type="Pfam" id="PF00696">
    <property type="entry name" value="AA_kinase"/>
    <property type="match status" value="1"/>
</dbReference>
<dbReference type="PIRSF" id="PIRSF005650">
    <property type="entry name" value="Uridylate_kin"/>
    <property type="match status" value="1"/>
</dbReference>
<dbReference type="SUPFAM" id="SSF53633">
    <property type="entry name" value="Carbamate kinase-like"/>
    <property type="match status" value="1"/>
</dbReference>
<keyword id="KW-0021">Allosteric enzyme</keyword>
<keyword id="KW-0067">ATP-binding</keyword>
<keyword id="KW-0963">Cytoplasm</keyword>
<keyword id="KW-0418">Kinase</keyword>
<keyword id="KW-0547">Nucleotide-binding</keyword>
<keyword id="KW-0665">Pyrimidine biosynthesis</keyword>
<keyword id="KW-0808">Transferase</keyword>
<protein>
    <recommendedName>
        <fullName evidence="1">Uridylate kinase</fullName>
        <shortName evidence="1">UK</shortName>
        <ecNumber evidence="1">2.7.4.22</ecNumber>
    </recommendedName>
    <alternativeName>
        <fullName evidence="1">Uridine monophosphate kinase</fullName>
        <shortName evidence="1">UMP kinase</shortName>
        <shortName evidence="1">UMPK</shortName>
    </alternativeName>
</protein>
<gene>
    <name evidence="1" type="primary">pyrH</name>
    <name type="ordered locus">ASA_3158</name>
</gene>
<evidence type="ECO:0000255" key="1">
    <source>
        <dbReference type="HAMAP-Rule" id="MF_01220"/>
    </source>
</evidence>
<feature type="chain" id="PRO_1000053885" description="Uridylate kinase">
    <location>
        <begin position="1"/>
        <end position="244"/>
    </location>
</feature>
<feature type="region of interest" description="Involved in allosteric activation by GTP" evidence="1">
    <location>
        <begin position="23"/>
        <end position="28"/>
    </location>
</feature>
<feature type="binding site" evidence="1">
    <location>
        <begin position="15"/>
        <end position="18"/>
    </location>
    <ligand>
        <name>ATP</name>
        <dbReference type="ChEBI" id="CHEBI:30616"/>
    </ligand>
</feature>
<feature type="binding site" evidence="1">
    <location>
        <position position="57"/>
    </location>
    <ligand>
        <name>UMP</name>
        <dbReference type="ChEBI" id="CHEBI:57865"/>
    </ligand>
</feature>
<feature type="binding site" evidence="1">
    <location>
        <position position="58"/>
    </location>
    <ligand>
        <name>ATP</name>
        <dbReference type="ChEBI" id="CHEBI:30616"/>
    </ligand>
</feature>
<feature type="binding site" evidence="1">
    <location>
        <position position="62"/>
    </location>
    <ligand>
        <name>ATP</name>
        <dbReference type="ChEBI" id="CHEBI:30616"/>
    </ligand>
</feature>
<feature type="binding site" evidence="1">
    <location>
        <position position="77"/>
    </location>
    <ligand>
        <name>UMP</name>
        <dbReference type="ChEBI" id="CHEBI:57865"/>
    </ligand>
</feature>
<feature type="binding site" evidence="1">
    <location>
        <begin position="138"/>
        <end position="145"/>
    </location>
    <ligand>
        <name>UMP</name>
        <dbReference type="ChEBI" id="CHEBI:57865"/>
    </ligand>
</feature>
<feature type="binding site" evidence="1">
    <location>
        <position position="165"/>
    </location>
    <ligand>
        <name>ATP</name>
        <dbReference type="ChEBI" id="CHEBI:30616"/>
    </ligand>
</feature>
<feature type="binding site" evidence="1">
    <location>
        <position position="171"/>
    </location>
    <ligand>
        <name>ATP</name>
        <dbReference type="ChEBI" id="CHEBI:30616"/>
    </ligand>
</feature>
<feature type="binding site" evidence="1">
    <location>
        <position position="174"/>
    </location>
    <ligand>
        <name>ATP</name>
        <dbReference type="ChEBI" id="CHEBI:30616"/>
    </ligand>
</feature>
<organism>
    <name type="scientific">Aeromonas salmonicida (strain A449)</name>
    <dbReference type="NCBI Taxonomy" id="382245"/>
    <lineage>
        <taxon>Bacteria</taxon>
        <taxon>Pseudomonadati</taxon>
        <taxon>Pseudomonadota</taxon>
        <taxon>Gammaproteobacteria</taxon>
        <taxon>Aeromonadales</taxon>
        <taxon>Aeromonadaceae</taxon>
        <taxon>Aeromonas</taxon>
    </lineage>
</organism>